<dbReference type="EMBL" id="X14508">
    <property type="protein sequence ID" value="CAA32660.1"/>
    <property type="molecule type" value="mRNA"/>
</dbReference>
<dbReference type="EMBL" id="X13148">
    <property type="protein sequence ID" value="CAA31546.1"/>
    <property type="molecule type" value="Genomic_DNA"/>
</dbReference>
<dbReference type="PIR" id="S04923">
    <property type="entry name" value="S04923"/>
</dbReference>
<dbReference type="SMR" id="P09080"/>
<dbReference type="GO" id="GO:0005634">
    <property type="term" value="C:nucleus"/>
    <property type="evidence" value="ECO:0007669"/>
    <property type="project" value="UniProtKB-SubCell"/>
</dbReference>
<dbReference type="GO" id="GO:0000981">
    <property type="term" value="F:DNA-binding transcription factor activity, RNA polymerase II-specific"/>
    <property type="evidence" value="ECO:0007669"/>
    <property type="project" value="InterPro"/>
</dbReference>
<dbReference type="GO" id="GO:0000978">
    <property type="term" value="F:RNA polymerase II cis-regulatory region sequence-specific DNA binding"/>
    <property type="evidence" value="ECO:0007669"/>
    <property type="project" value="TreeGrafter"/>
</dbReference>
<dbReference type="GO" id="GO:0009952">
    <property type="term" value="P:anterior/posterior pattern specification"/>
    <property type="evidence" value="ECO:0007669"/>
    <property type="project" value="TreeGrafter"/>
</dbReference>
<dbReference type="CDD" id="cd00086">
    <property type="entry name" value="homeodomain"/>
    <property type="match status" value="1"/>
</dbReference>
<dbReference type="FunFam" id="1.10.10.60:FF:000193">
    <property type="entry name" value="Ultrabithorax, isoform C"/>
    <property type="match status" value="1"/>
</dbReference>
<dbReference type="Gene3D" id="1.10.10.60">
    <property type="entry name" value="Homeodomain-like"/>
    <property type="match status" value="1"/>
</dbReference>
<dbReference type="InterPro" id="IPR050296">
    <property type="entry name" value="Antp_homeobox"/>
</dbReference>
<dbReference type="InterPro" id="IPR001356">
    <property type="entry name" value="HD"/>
</dbReference>
<dbReference type="InterPro" id="IPR020479">
    <property type="entry name" value="HD_metazoa"/>
</dbReference>
<dbReference type="InterPro" id="IPR017970">
    <property type="entry name" value="Homeobox_CS"/>
</dbReference>
<dbReference type="InterPro" id="IPR009057">
    <property type="entry name" value="Homeodomain-like_sf"/>
</dbReference>
<dbReference type="InterPro" id="IPR000047">
    <property type="entry name" value="HTH_motif"/>
</dbReference>
<dbReference type="PANTHER" id="PTHR45659:SF4">
    <property type="entry name" value="HOMEOBOX PROTEIN ABDOMINAL-A"/>
    <property type="match status" value="1"/>
</dbReference>
<dbReference type="PANTHER" id="PTHR45659">
    <property type="entry name" value="HOMEOBOX PROTEIN HOX"/>
    <property type="match status" value="1"/>
</dbReference>
<dbReference type="Pfam" id="PF00046">
    <property type="entry name" value="Homeodomain"/>
    <property type="match status" value="1"/>
</dbReference>
<dbReference type="PRINTS" id="PR00024">
    <property type="entry name" value="HOMEOBOX"/>
</dbReference>
<dbReference type="PRINTS" id="PR00031">
    <property type="entry name" value="HTHREPRESSR"/>
</dbReference>
<dbReference type="SMART" id="SM00389">
    <property type="entry name" value="HOX"/>
    <property type="match status" value="1"/>
</dbReference>
<dbReference type="SUPFAM" id="SSF46689">
    <property type="entry name" value="Homeodomain-like"/>
    <property type="match status" value="1"/>
</dbReference>
<dbReference type="PROSITE" id="PS00027">
    <property type="entry name" value="HOMEOBOX_1"/>
    <property type="match status" value="1"/>
</dbReference>
<dbReference type="PROSITE" id="PS50071">
    <property type="entry name" value="HOMEOBOX_2"/>
    <property type="match status" value="1"/>
</dbReference>
<keyword id="KW-0217">Developmental protein</keyword>
<keyword id="KW-0238">DNA-binding</keyword>
<keyword id="KW-0371">Homeobox</keyword>
<keyword id="KW-0539">Nucleus</keyword>
<reference key="1">
    <citation type="journal article" date="1989" name="Genes Dev.">
        <title>Progressively restricted expression of a homeo box gene within the aboral ectoderm of developing sea urchin embryos.</title>
        <authorList>
            <person name="Angerer L.M."/>
            <person name="Dolecki G.J."/>
            <person name="Gagnon M.L."/>
            <person name="Lum R."/>
            <person name="Yang W.Q."/>
            <person name="Humphreys T."/>
            <person name="Angerer R."/>
        </authorList>
    </citation>
    <scope>NUCLEOTIDE SEQUENCE [MRNA]</scope>
</reference>
<reference key="2">
    <citation type="submission" date="1988-10" db="EMBL/GenBank/DDBJ databases">
        <authorList>
            <person name="Dolecki G.J."/>
        </authorList>
    </citation>
    <scope>NUCLEOTIDE SEQUENCE OF 181-307</scope>
</reference>
<reference key="3">
    <citation type="journal article" date="1986" name="EMBO J.">
        <title>Stage-specific expression of a homeo box-containing gene in the non-segmented sea urchin embryo.</title>
        <authorList>
            <person name="Dolecki G.J."/>
            <person name="Wannakrairoj S."/>
            <person name="Lum R."/>
            <person name="Wang G."/>
            <person name="Riley H.D."/>
            <person name="Carlos R."/>
            <person name="Wang A."/>
            <person name="Humphreys T."/>
        </authorList>
    </citation>
    <scope>NUCLEOTIDE SEQUENCE [GENOMIC DNA] OF 182-256</scope>
</reference>
<comment type="subcellular location">
    <subcellularLocation>
        <location evidence="3">Nucleus</location>
    </subcellularLocation>
</comment>
<comment type="similarity">
    <text evidence="3">Belongs to the Antp homeobox family.</text>
</comment>
<sequence>NSGVFVNPPFFPTYPHAGEQFYVTPPGSYELSSCAFSSKNPKTSSYSSSSSPPSLTATSKPSCTQQLGAATFYGGGTLSNFSTAGYGDHSTTSAGYGSMSQPISPTSAWDSRMAATYNTTSWGSTAAELGDGSYRGRVNALAAGTGCLVSAAAEPNNNHCSQVMSPCKSTSGYPWMPVAGPNVGLEVGRKRCRQTYTRYQTLELEKEFHFNRYLTRRRRIELSHLLGLTERQIKIWFQNRRMKYKKESKNKEEGVSGEGDGENETESTGTENAQTQNAVHGVTILEKPSSLVLHVDDTIALNTVRHS</sequence>
<protein>
    <recommendedName>
        <fullName>Homeobox protein HB1</fullName>
    </recommendedName>
    <alternativeName>
        <fullName>TGHBOX1</fullName>
    </alternativeName>
</protein>
<evidence type="ECO:0000255" key="1">
    <source>
        <dbReference type="PROSITE-ProRule" id="PRU00108"/>
    </source>
</evidence>
<evidence type="ECO:0000256" key="2">
    <source>
        <dbReference type="SAM" id="MobiDB-lite"/>
    </source>
</evidence>
<evidence type="ECO:0000305" key="3"/>
<feature type="chain" id="PRO_0000049011" description="Homeobox protein HB1">
    <location>
        <begin position="1" status="less than"/>
        <end position="307"/>
    </location>
</feature>
<feature type="DNA-binding region" description="Homeobox" evidence="1">
    <location>
        <begin position="189"/>
        <end position="248"/>
    </location>
</feature>
<feature type="region of interest" description="Disordered" evidence="2">
    <location>
        <begin position="42"/>
        <end position="62"/>
    </location>
</feature>
<feature type="region of interest" description="Disordered" evidence="2">
    <location>
        <begin position="246"/>
        <end position="277"/>
    </location>
</feature>
<feature type="short sequence motif" description="Antp-type hexapeptide">
    <location>
        <begin position="172"/>
        <end position="177"/>
    </location>
</feature>
<feature type="sequence conflict" description="In Ref. 3." evidence="3" ref="3">
    <original>T</original>
    <variation>R</variation>
    <location>
        <position position="201"/>
    </location>
</feature>
<feature type="non-terminal residue">
    <location>
        <position position="1"/>
    </location>
</feature>
<proteinExistence type="evidence at transcript level"/>
<organism>
    <name type="scientific">Tripneustes gratilla</name>
    <name type="common">Hawaian sea urchin</name>
    <name type="synonym">Echinus gratilla</name>
    <dbReference type="NCBI Taxonomy" id="7673"/>
    <lineage>
        <taxon>Eukaryota</taxon>
        <taxon>Metazoa</taxon>
        <taxon>Echinodermata</taxon>
        <taxon>Eleutherozoa</taxon>
        <taxon>Echinozoa</taxon>
        <taxon>Echinoidea</taxon>
        <taxon>Euechinoidea</taxon>
        <taxon>Echinacea</taxon>
        <taxon>Temnopleuroida</taxon>
        <taxon>Toxopneustidae</taxon>
        <taxon>Tripneustes</taxon>
    </lineage>
</organism>
<name>HMB1_TRIGR</name>
<accession>P09080</accession>